<keyword id="KW-0106">Calcium</keyword>
<keyword id="KW-0997">Cell inner membrane</keyword>
<keyword id="KW-1003">Cell membrane</keyword>
<keyword id="KW-0472">Membrane</keyword>
<keyword id="KW-0479">Metal-binding</keyword>
<keyword id="KW-0653">Protein transport</keyword>
<keyword id="KW-0812">Transmembrane</keyword>
<keyword id="KW-1133">Transmembrane helix</keyword>
<keyword id="KW-0813">Transport</keyword>
<evidence type="ECO:0000250" key="1">
    <source>
        <dbReference type="UniProtKB" id="P41441"/>
    </source>
</evidence>
<evidence type="ECO:0000250" key="2">
    <source>
        <dbReference type="UniProtKB" id="P45780"/>
    </source>
</evidence>
<evidence type="ECO:0000250" key="3">
    <source>
        <dbReference type="UniProtKB" id="Q00513"/>
    </source>
</evidence>
<evidence type="ECO:0000250" key="4">
    <source>
        <dbReference type="UniProtKB" id="Q00514"/>
    </source>
</evidence>
<evidence type="ECO:0000255" key="5"/>
<evidence type="ECO:0000305" key="6"/>
<name>GSPF_DICCH</name>
<feature type="chain" id="PRO_0000207832" description="Type II secretion system protein F">
    <location>
        <begin position="1"/>
        <end position="404"/>
    </location>
</feature>
<feature type="topological domain" description="Cytoplasmic" evidence="3">
    <location>
        <begin position="1"/>
        <end position="171"/>
    </location>
</feature>
<feature type="transmembrane region" description="Helical" evidence="5">
    <location>
        <begin position="172"/>
        <end position="192"/>
    </location>
</feature>
<feature type="topological domain" description="Periplasmic" evidence="3">
    <location>
        <begin position="193"/>
        <end position="222"/>
    </location>
</feature>
<feature type="transmembrane region" description="Helical" evidence="5">
    <location>
        <begin position="223"/>
        <end position="243"/>
    </location>
</feature>
<feature type="topological domain" description="Cytoplasmic" evidence="3">
    <location>
        <begin position="244"/>
        <end position="374"/>
    </location>
</feature>
<feature type="transmembrane region" description="Helical" evidence="5">
    <location>
        <begin position="375"/>
        <end position="395"/>
    </location>
</feature>
<feature type="topological domain" description="Periplasmic" evidence="1">
    <location>
        <begin position="396"/>
        <end position="404"/>
    </location>
</feature>
<feature type="binding site" evidence="2">
    <location>
        <position position="97"/>
    </location>
    <ligand>
        <name>Ca(2+)</name>
        <dbReference type="ChEBI" id="CHEBI:29108"/>
    </ligand>
</feature>
<feature type="binding site" evidence="2">
    <location>
        <position position="151"/>
    </location>
    <ligand>
        <name>Ca(2+)</name>
        <dbReference type="ChEBI" id="CHEBI:29108"/>
    </ligand>
</feature>
<feature type="binding site" evidence="2">
    <location>
        <position position="155"/>
    </location>
    <ligand>
        <name>Ca(2+)</name>
        <dbReference type="ChEBI" id="CHEBI:29108"/>
    </ligand>
</feature>
<proteinExistence type="evidence at protein level"/>
<gene>
    <name type="primary">outF</name>
</gene>
<comment type="function">
    <text evidence="4">Component of the type II secretion system inner membrane complex required for the energy-dependent secretion of extracellular factors such as proteases and toxins from the periplasm.</text>
</comment>
<comment type="subunit">
    <text evidence="2 3 4">Type II secretion system is composed of four main components: the outer membrane complex, the inner membrane complex, the cytoplasmic secretion ATPase and the periplasm-spanning pseudopilus (By similarity). Homodimer (By similarity). Interacts with OutE and OutL components (By similarity).</text>
</comment>
<comment type="subcellular location">
    <subcellularLocation>
        <location evidence="6">Cell inner membrane</location>
        <topology evidence="6">Multi-pass membrane protein</topology>
    </subcellularLocation>
</comment>
<comment type="similarity">
    <text evidence="6">Belongs to the GSP F family.</text>
</comment>
<reference key="1">
    <citation type="journal article" date="1992" name="J. Bacteriol.">
        <title>Analysis of eight out genes in a cluster required for pectic enzyme secretion by Erwinia chrysanthemi: sequence comparison with secretion genes from other Gram-negative bacteria.</title>
        <authorList>
            <person name="Lindeberg M."/>
            <person name="Collmer A."/>
        </authorList>
    </citation>
    <scope>NUCLEOTIDE SEQUENCE [GENOMIC DNA]</scope>
    <source>
        <strain>EC16</strain>
    </source>
</reference>
<reference key="2">
    <citation type="journal article" date="2001" name="EMBO Rep.">
        <title>An inner membrane platform in the type II secretion machinery of Gram-negative bacteria.</title>
        <authorList>
            <person name="Py B."/>
            <person name="Loiseau L."/>
            <person name="Barras F."/>
        </authorList>
    </citation>
    <scope>INTERACTION WITH GSPE/OUTE AND GSPL/OUTL</scope>
</reference>
<sequence>MALFQYQALNAQGKKSQGMQEADSARHARQLLREKGLVPVKIEEQRGEAAPRSGFSLSFGRSHRIASDLALLTRQLATLVAALPLEEALDAVAKQSEKPKLSALMAAVRAKVVEGHSLAEAMGNFPGSFERLYCAMVAAGEASGHLDAVLNRLADYTEQRHEMRSRIQQAMIYPCVLTLVAISVVSILLSAVVPKVVEQFIHMKQALPLSTRLLMSASDAVRTYGPWVVLLLVLAIMGFRVLLRQEKHRLVFHRRLLFLPVVGRVARGLNTARYARTLSILNSSAVPLLQAMRISGDVLTNDYARFRLGQATDAVREGVTLHKALEQTALFPPMMRHMIASERRRARRHVNPRGDNQDREFSAQMTLVLGLFEPLLVVSMAGIVLFIVLAILQPILQLNTLMSM</sequence>
<protein>
    <recommendedName>
        <fullName>Type II secretion system protein F</fullName>
        <shortName>T2SS protein F</shortName>
    </recommendedName>
    <alternativeName>
        <fullName>General secretion pathway protein F</fullName>
    </alternativeName>
    <alternativeName>
        <fullName>Pectic enzymes secretion protein OutF</fullName>
    </alternativeName>
</protein>
<dbReference type="EMBL" id="L02214">
    <property type="protein sequence ID" value="AAA24833.1"/>
    <property type="molecule type" value="Genomic_DNA"/>
</dbReference>
<dbReference type="PIR" id="D47021">
    <property type="entry name" value="D47021"/>
</dbReference>
<dbReference type="SMR" id="P31704"/>
<dbReference type="IntAct" id="P31704">
    <property type="interactions" value="1"/>
</dbReference>
<dbReference type="GO" id="GO:0005886">
    <property type="term" value="C:plasma membrane"/>
    <property type="evidence" value="ECO:0007669"/>
    <property type="project" value="UniProtKB-SubCell"/>
</dbReference>
<dbReference type="GO" id="GO:0015627">
    <property type="term" value="C:type II protein secretion system complex"/>
    <property type="evidence" value="ECO:0007669"/>
    <property type="project" value="InterPro"/>
</dbReference>
<dbReference type="GO" id="GO:0046872">
    <property type="term" value="F:metal ion binding"/>
    <property type="evidence" value="ECO:0007669"/>
    <property type="project" value="UniProtKB-KW"/>
</dbReference>
<dbReference type="GO" id="GO:0015628">
    <property type="term" value="P:protein secretion by the type II secretion system"/>
    <property type="evidence" value="ECO:0007669"/>
    <property type="project" value="InterPro"/>
</dbReference>
<dbReference type="FunFam" id="1.20.81.30:FF:000001">
    <property type="entry name" value="Type II secretion system protein F"/>
    <property type="match status" value="1"/>
</dbReference>
<dbReference type="Gene3D" id="1.20.81.30">
    <property type="entry name" value="Type II secretion system (T2SS), domain F"/>
    <property type="match status" value="2"/>
</dbReference>
<dbReference type="InterPro" id="IPR003004">
    <property type="entry name" value="GspF/PilC"/>
</dbReference>
<dbReference type="InterPro" id="IPR011850">
    <property type="entry name" value="T2SS_GspF"/>
</dbReference>
<dbReference type="InterPro" id="IPR001992">
    <property type="entry name" value="T2SS_GspF/T4SS_PilC_CS"/>
</dbReference>
<dbReference type="InterPro" id="IPR018076">
    <property type="entry name" value="T2SS_GspF_dom"/>
</dbReference>
<dbReference type="InterPro" id="IPR042094">
    <property type="entry name" value="T2SS_GspF_sf"/>
</dbReference>
<dbReference type="NCBIfam" id="TIGR02120">
    <property type="entry name" value="GspF"/>
    <property type="match status" value="1"/>
</dbReference>
<dbReference type="PANTHER" id="PTHR30012">
    <property type="entry name" value="GENERAL SECRETION PATHWAY PROTEIN"/>
    <property type="match status" value="1"/>
</dbReference>
<dbReference type="PANTHER" id="PTHR30012:SF0">
    <property type="entry name" value="TYPE II SECRETION SYSTEM PROTEIN F-RELATED"/>
    <property type="match status" value="1"/>
</dbReference>
<dbReference type="Pfam" id="PF00482">
    <property type="entry name" value="T2SSF"/>
    <property type="match status" value="2"/>
</dbReference>
<dbReference type="PRINTS" id="PR00812">
    <property type="entry name" value="BCTERIALGSPF"/>
</dbReference>
<dbReference type="PROSITE" id="PS00874">
    <property type="entry name" value="T2SP_F"/>
    <property type="match status" value="1"/>
</dbReference>
<organism>
    <name type="scientific">Dickeya chrysanthemi</name>
    <name type="common">Pectobacterium chrysanthemi</name>
    <name type="synonym">Erwinia chrysanthemi</name>
    <dbReference type="NCBI Taxonomy" id="556"/>
    <lineage>
        <taxon>Bacteria</taxon>
        <taxon>Pseudomonadati</taxon>
        <taxon>Pseudomonadota</taxon>
        <taxon>Gammaproteobacteria</taxon>
        <taxon>Enterobacterales</taxon>
        <taxon>Pectobacteriaceae</taxon>
        <taxon>Dickeya</taxon>
    </lineage>
</organism>
<accession>P31704</accession>